<comment type="function">
    <text evidence="1">This protein binds to the 23S rRNA, and is important in its secondary structure. It is located near the subunit interface in the base of the L7/L12 stalk, and near the tRNA binding site of the peptidyltransferase center.</text>
</comment>
<comment type="subunit">
    <text evidence="1">Part of the 50S ribosomal subunit.</text>
</comment>
<comment type="similarity">
    <text evidence="1">Belongs to the universal ribosomal protein uL6 family.</text>
</comment>
<feature type="chain" id="PRO_0000265313" description="Large ribosomal subunit protein uL6">
    <location>
        <begin position="1"/>
        <end position="177"/>
    </location>
</feature>
<gene>
    <name evidence="1" type="primary">rplF</name>
    <name type="ordered locus">YPO0224</name>
    <name type="ordered locus">y4004</name>
    <name type="ordered locus">YP_0222</name>
</gene>
<keyword id="KW-1185">Reference proteome</keyword>
<keyword id="KW-0687">Ribonucleoprotein</keyword>
<keyword id="KW-0689">Ribosomal protein</keyword>
<keyword id="KW-0694">RNA-binding</keyword>
<keyword id="KW-0699">rRNA-binding</keyword>
<evidence type="ECO:0000255" key="1">
    <source>
        <dbReference type="HAMAP-Rule" id="MF_01365"/>
    </source>
</evidence>
<evidence type="ECO:0000305" key="2"/>
<proteinExistence type="inferred from homology"/>
<accession>Q7CFT4</accession>
<accession>Q74XY6</accession>
<dbReference type="EMBL" id="AE009952">
    <property type="protein sequence ID" value="AAM87548.1"/>
    <property type="molecule type" value="Genomic_DNA"/>
</dbReference>
<dbReference type="EMBL" id="AL590842">
    <property type="protein sequence ID" value="CAL18907.1"/>
    <property type="molecule type" value="Genomic_DNA"/>
</dbReference>
<dbReference type="EMBL" id="AE017042">
    <property type="protein sequence ID" value="AAS60498.1"/>
    <property type="molecule type" value="Genomic_DNA"/>
</dbReference>
<dbReference type="PIR" id="AI0027">
    <property type="entry name" value="AI0027"/>
</dbReference>
<dbReference type="RefSeq" id="WP_002213334.1">
    <property type="nucleotide sequence ID" value="NZ_WUCM01000078.1"/>
</dbReference>
<dbReference type="RefSeq" id="YP_002345305.1">
    <property type="nucleotide sequence ID" value="NC_003143.1"/>
</dbReference>
<dbReference type="SMR" id="Q7CFT4"/>
<dbReference type="STRING" id="214092.YPO0224"/>
<dbReference type="PaxDb" id="214092-YPO0224"/>
<dbReference type="DNASU" id="1148951"/>
<dbReference type="EnsemblBacteria" id="AAS60498">
    <property type="protein sequence ID" value="AAS60498"/>
    <property type="gene ID" value="YP_0222"/>
</dbReference>
<dbReference type="GeneID" id="96663181"/>
<dbReference type="KEGG" id="ype:YPO0224"/>
<dbReference type="KEGG" id="ypk:y4004"/>
<dbReference type="KEGG" id="ypm:YP_0222"/>
<dbReference type="PATRIC" id="fig|214092.21.peg.453"/>
<dbReference type="eggNOG" id="COG0097">
    <property type="taxonomic scope" value="Bacteria"/>
</dbReference>
<dbReference type="HOGENOM" id="CLU_065464_1_2_6"/>
<dbReference type="OMA" id="RERHGLC"/>
<dbReference type="OrthoDB" id="9805007at2"/>
<dbReference type="Proteomes" id="UP000000815">
    <property type="component" value="Chromosome"/>
</dbReference>
<dbReference type="Proteomes" id="UP000001019">
    <property type="component" value="Chromosome"/>
</dbReference>
<dbReference type="Proteomes" id="UP000002490">
    <property type="component" value="Chromosome"/>
</dbReference>
<dbReference type="GO" id="GO:0022625">
    <property type="term" value="C:cytosolic large ribosomal subunit"/>
    <property type="evidence" value="ECO:0000318"/>
    <property type="project" value="GO_Central"/>
</dbReference>
<dbReference type="GO" id="GO:0019843">
    <property type="term" value="F:rRNA binding"/>
    <property type="evidence" value="ECO:0007669"/>
    <property type="project" value="UniProtKB-UniRule"/>
</dbReference>
<dbReference type="GO" id="GO:0003735">
    <property type="term" value="F:structural constituent of ribosome"/>
    <property type="evidence" value="ECO:0000318"/>
    <property type="project" value="GO_Central"/>
</dbReference>
<dbReference type="GO" id="GO:0002181">
    <property type="term" value="P:cytoplasmic translation"/>
    <property type="evidence" value="ECO:0000318"/>
    <property type="project" value="GO_Central"/>
</dbReference>
<dbReference type="FunFam" id="3.90.930.12:FF:000001">
    <property type="entry name" value="50S ribosomal protein L6"/>
    <property type="match status" value="1"/>
</dbReference>
<dbReference type="FunFam" id="3.90.930.12:FF:000002">
    <property type="entry name" value="50S ribosomal protein L6"/>
    <property type="match status" value="1"/>
</dbReference>
<dbReference type="Gene3D" id="3.90.930.12">
    <property type="entry name" value="Ribosomal protein L6, alpha-beta domain"/>
    <property type="match status" value="2"/>
</dbReference>
<dbReference type="HAMAP" id="MF_01365_B">
    <property type="entry name" value="Ribosomal_uL6_B"/>
    <property type="match status" value="1"/>
</dbReference>
<dbReference type="InterPro" id="IPR000702">
    <property type="entry name" value="Ribosomal_uL6-like"/>
</dbReference>
<dbReference type="InterPro" id="IPR036789">
    <property type="entry name" value="Ribosomal_uL6-like_a/b-dom_sf"/>
</dbReference>
<dbReference type="InterPro" id="IPR020040">
    <property type="entry name" value="Ribosomal_uL6_a/b-dom"/>
</dbReference>
<dbReference type="InterPro" id="IPR019906">
    <property type="entry name" value="Ribosomal_uL6_bac-type"/>
</dbReference>
<dbReference type="InterPro" id="IPR002358">
    <property type="entry name" value="Ribosomal_uL6_CS"/>
</dbReference>
<dbReference type="NCBIfam" id="TIGR03654">
    <property type="entry name" value="L6_bact"/>
    <property type="match status" value="1"/>
</dbReference>
<dbReference type="PANTHER" id="PTHR11655">
    <property type="entry name" value="60S/50S RIBOSOMAL PROTEIN L6/L9"/>
    <property type="match status" value="1"/>
</dbReference>
<dbReference type="PANTHER" id="PTHR11655:SF14">
    <property type="entry name" value="LARGE RIBOSOMAL SUBUNIT PROTEIN UL6M"/>
    <property type="match status" value="1"/>
</dbReference>
<dbReference type="Pfam" id="PF00347">
    <property type="entry name" value="Ribosomal_L6"/>
    <property type="match status" value="2"/>
</dbReference>
<dbReference type="PIRSF" id="PIRSF002162">
    <property type="entry name" value="Ribosomal_L6"/>
    <property type="match status" value="1"/>
</dbReference>
<dbReference type="PRINTS" id="PR00059">
    <property type="entry name" value="RIBOSOMALL6"/>
</dbReference>
<dbReference type="SUPFAM" id="SSF56053">
    <property type="entry name" value="Ribosomal protein L6"/>
    <property type="match status" value="2"/>
</dbReference>
<dbReference type="PROSITE" id="PS00525">
    <property type="entry name" value="RIBOSOMAL_L6_1"/>
    <property type="match status" value="1"/>
</dbReference>
<organism>
    <name type="scientific">Yersinia pestis</name>
    <dbReference type="NCBI Taxonomy" id="632"/>
    <lineage>
        <taxon>Bacteria</taxon>
        <taxon>Pseudomonadati</taxon>
        <taxon>Pseudomonadota</taxon>
        <taxon>Gammaproteobacteria</taxon>
        <taxon>Enterobacterales</taxon>
        <taxon>Yersiniaceae</taxon>
        <taxon>Yersinia</taxon>
    </lineage>
</organism>
<sequence>MSRVAKAPVVIPAGVEVKLNGQVISIKGKNGELTRTVHSAVEVKQEENTLTFAPREGAVDGWAQAGTTRALLNSMVIGVTEGFTKKLQLVGVGYRAAVKGNVVNLALGFSHPVDHELPAGITAECPTQTEIVLKGADKQVIGQVAADLRAYRRPEPYKGKGVRYADEVVRTKEAKKK</sequence>
<reference key="1">
    <citation type="journal article" date="2002" name="J. Bacteriol.">
        <title>Genome sequence of Yersinia pestis KIM.</title>
        <authorList>
            <person name="Deng W."/>
            <person name="Burland V."/>
            <person name="Plunkett G. III"/>
            <person name="Boutin A."/>
            <person name="Mayhew G.F."/>
            <person name="Liss P."/>
            <person name="Perna N.T."/>
            <person name="Rose D.J."/>
            <person name="Mau B."/>
            <person name="Zhou S."/>
            <person name="Schwartz D.C."/>
            <person name="Fetherston J.D."/>
            <person name="Lindler L.E."/>
            <person name="Brubaker R.R."/>
            <person name="Plano G.V."/>
            <person name="Straley S.C."/>
            <person name="McDonough K.A."/>
            <person name="Nilles M.L."/>
            <person name="Matson J.S."/>
            <person name="Blattner F.R."/>
            <person name="Perry R.D."/>
        </authorList>
    </citation>
    <scope>NUCLEOTIDE SEQUENCE [LARGE SCALE GENOMIC DNA]</scope>
    <source>
        <strain>KIM10+ / Biovar Mediaevalis</strain>
    </source>
</reference>
<reference key="2">
    <citation type="journal article" date="2001" name="Nature">
        <title>Genome sequence of Yersinia pestis, the causative agent of plague.</title>
        <authorList>
            <person name="Parkhill J."/>
            <person name="Wren B.W."/>
            <person name="Thomson N.R."/>
            <person name="Titball R.W."/>
            <person name="Holden M.T.G."/>
            <person name="Prentice M.B."/>
            <person name="Sebaihia M."/>
            <person name="James K.D."/>
            <person name="Churcher C.M."/>
            <person name="Mungall K.L."/>
            <person name="Baker S."/>
            <person name="Basham D."/>
            <person name="Bentley S.D."/>
            <person name="Brooks K."/>
            <person name="Cerdeno-Tarraga A.-M."/>
            <person name="Chillingworth T."/>
            <person name="Cronin A."/>
            <person name="Davies R.M."/>
            <person name="Davis P."/>
            <person name="Dougan G."/>
            <person name="Feltwell T."/>
            <person name="Hamlin N."/>
            <person name="Holroyd S."/>
            <person name="Jagels K."/>
            <person name="Karlyshev A.V."/>
            <person name="Leather S."/>
            <person name="Moule S."/>
            <person name="Oyston P.C.F."/>
            <person name="Quail M.A."/>
            <person name="Rutherford K.M."/>
            <person name="Simmonds M."/>
            <person name="Skelton J."/>
            <person name="Stevens K."/>
            <person name="Whitehead S."/>
            <person name="Barrell B.G."/>
        </authorList>
    </citation>
    <scope>NUCLEOTIDE SEQUENCE [LARGE SCALE GENOMIC DNA]</scope>
    <source>
        <strain>CO-92 / Biovar Orientalis</strain>
    </source>
</reference>
<reference key="3">
    <citation type="journal article" date="2004" name="DNA Res.">
        <title>Complete genome sequence of Yersinia pestis strain 91001, an isolate avirulent to humans.</title>
        <authorList>
            <person name="Song Y."/>
            <person name="Tong Z."/>
            <person name="Wang J."/>
            <person name="Wang L."/>
            <person name="Guo Z."/>
            <person name="Han Y."/>
            <person name="Zhang J."/>
            <person name="Pei D."/>
            <person name="Zhou D."/>
            <person name="Qin H."/>
            <person name="Pang X."/>
            <person name="Han Y."/>
            <person name="Zhai J."/>
            <person name="Li M."/>
            <person name="Cui B."/>
            <person name="Qi Z."/>
            <person name="Jin L."/>
            <person name="Dai R."/>
            <person name="Chen F."/>
            <person name="Li S."/>
            <person name="Ye C."/>
            <person name="Du Z."/>
            <person name="Lin W."/>
            <person name="Wang J."/>
            <person name="Yu J."/>
            <person name="Yang H."/>
            <person name="Wang J."/>
            <person name="Huang P."/>
            <person name="Yang R."/>
        </authorList>
    </citation>
    <scope>NUCLEOTIDE SEQUENCE [LARGE SCALE GENOMIC DNA]</scope>
    <source>
        <strain>91001 / Biovar Mediaevalis</strain>
    </source>
</reference>
<name>RL6_YERPE</name>
<protein>
    <recommendedName>
        <fullName evidence="1">Large ribosomal subunit protein uL6</fullName>
    </recommendedName>
    <alternativeName>
        <fullName evidence="2">50S ribosomal protein L6</fullName>
    </alternativeName>
</protein>